<organism>
    <name type="scientific">Vibrio vulnificus (strain YJ016)</name>
    <dbReference type="NCBI Taxonomy" id="196600"/>
    <lineage>
        <taxon>Bacteria</taxon>
        <taxon>Pseudomonadati</taxon>
        <taxon>Pseudomonadota</taxon>
        <taxon>Gammaproteobacteria</taxon>
        <taxon>Vibrionales</taxon>
        <taxon>Vibrionaceae</taxon>
        <taxon>Vibrio</taxon>
    </lineage>
</organism>
<accession>Q7MNV9</accession>
<comment type="function">
    <text evidence="1">Specifically methylates the N4 position of cytidine in position 1402 (C1402) of 16S rRNA.</text>
</comment>
<comment type="catalytic activity">
    <reaction evidence="1">
        <text>cytidine(1402) in 16S rRNA + S-adenosyl-L-methionine = N(4)-methylcytidine(1402) in 16S rRNA + S-adenosyl-L-homocysteine + H(+)</text>
        <dbReference type="Rhea" id="RHEA:42928"/>
        <dbReference type="Rhea" id="RHEA-COMP:10286"/>
        <dbReference type="Rhea" id="RHEA-COMP:10287"/>
        <dbReference type="ChEBI" id="CHEBI:15378"/>
        <dbReference type="ChEBI" id="CHEBI:57856"/>
        <dbReference type="ChEBI" id="CHEBI:59789"/>
        <dbReference type="ChEBI" id="CHEBI:74506"/>
        <dbReference type="ChEBI" id="CHEBI:82748"/>
        <dbReference type="EC" id="2.1.1.199"/>
    </reaction>
</comment>
<comment type="subcellular location">
    <subcellularLocation>
        <location evidence="1">Cytoplasm</location>
    </subcellularLocation>
</comment>
<comment type="similarity">
    <text evidence="1">Belongs to the methyltransferase superfamily. RsmH family.</text>
</comment>
<gene>
    <name evidence="1" type="primary">rsmH</name>
    <name type="synonym">mraW</name>
    <name type="ordered locus">VV0606</name>
</gene>
<reference key="1">
    <citation type="journal article" date="2003" name="Genome Res.">
        <title>Comparative genome analysis of Vibrio vulnificus, a marine pathogen.</title>
        <authorList>
            <person name="Chen C.-Y."/>
            <person name="Wu K.-M."/>
            <person name="Chang Y.-C."/>
            <person name="Chang C.-H."/>
            <person name="Tsai H.-C."/>
            <person name="Liao T.-L."/>
            <person name="Liu Y.-M."/>
            <person name="Chen H.-J."/>
            <person name="Shen A.B.-T."/>
            <person name="Li J.-C."/>
            <person name="Su T.-L."/>
            <person name="Shao C.-P."/>
            <person name="Lee C.-T."/>
            <person name="Hor L.-I."/>
            <person name="Tsai S.-F."/>
        </authorList>
    </citation>
    <scope>NUCLEOTIDE SEQUENCE [LARGE SCALE GENOMIC DNA]</scope>
    <source>
        <strain>YJ016</strain>
    </source>
</reference>
<dbReference type="EC" id="2.1.1.199" evidence="1"/>
<dbReference type="EMBL" id="BA000037">
    <property type="protein sequence ID" value="BAC93370.1"/>
    <property type="molecule type" value="Genomic_DNA"/>
</dbReference>
<dbReference type="RefSeq" id="WP_011078671.1">
    <property type="nucleotide sequence ID" value="NC_005139.1"/>
</dbReference>
<dbReference type="SMR" id="Q7MNV9"/>
<dbReference type="STRING" id="672.VV93_v1c05490"/>
<dbReference type="GeneID" id="93894898"/>
<dbReference type="KEGG" id="vvy:VV0606"/>
<dbReference type="eggNOG" id="COG0275">
    <property type="taxonomic scope" value="Bacteria"/>
</dbReference>
<dbReference type="HOGENOM" id="CLU_038422_2_0_6"/>
<dbReference type="Proteomes" id="UP000002675">
    <property type="component" value="Chromosome I"/>
</dbReference>
<dbReference type="GO" id="GO:0005737">
    <property type="term" value="C:cytoplasm"/>
    <property type="evidence" value="ECO:0007669"/>
    <property type="project" value="UniProtKB-SubCell"/>
</dbReference>
<dbReference type="GO" id="GO:0071424">
    <property type="term" value="F:rRNA (cytosine-N4-)-methyltransferase activity"/>
    <property type="evidence" value="ECO:0007669"/>
    <property type="project" value="UniProtKB-UniRule"/>
</dbReference>
<dbReference type="GO" id="GO:0070475">
    <property type="term" value="P:rRNA base methylation"/>
    <property type="evidence" value="ECO:0007669"/>
    <property type="project" value="UniProtKB-UniRule"/>
</dbReference>
<dbReference type="FunFam" id="1.10.150.170:FF:000001">
    <property type="entry name" value="Ribosomal RNA small subunit methyltransferase H"/>
    <property type="match status" value="1"/>
</dbReference>
<dbReference type="Gene3D" id="1.10.150.170">
    <property type="entry name" value="Putative methyltransferase TM0872, insert domain"/>
    <property type="match status" value="1"/>
</dbReference>
<dbReference type="Gene3D" id="3.40.50.150">
    <property type="entry name" value="Vaccinia Virus protein VP39"/>
    <property type="match status" value="1"/>
</dbReference>
<dbReference type="HAMAP" id="MF_01007">
    <property type="entry name" value="16SrRNA_methyltr_H"/>
    <property type="match status" value="1"/>
</dbReference>
<dbReference type="InterPro" id="IPR002903">
    <property type="entry name" value="RsmH"/>
</dbReference>
<dbReference type="InterPro" id="IPR023397">
    <property type="entry name" value="SAM-dep_MeTrfase_MraW_recog"/>
</dbReference>
<dbReference type="InterPro" id="IPR029063">
    <property type="entry name" value="SAM-dependent_MTases_sf"/>
</dbReference>
<dbReference type="NCBIfam" id="TIGR00006">
    <property type="entry name" value="16S rRNA (cytosine(1402)-N(4))-methyltransferase RsmH"/>
    <property type="match status" value="1"/>
</dbReference>
<dbReference type="PANTHER" id="PTHR11265:SF0">
    <property type="entry name" value="12S RRNA N4-METHYLCYTIDINE METHYLTRANSFERASE"/>
    <property type="match status" value="1"/>
</dbReference>
<dbReference type="PANTHER" id="PTHR11265">
    <property type="entry name" value="S-ADENOSYL-METHYLTRANSFERASE MRAW"/>
    <property type="match status" value="1"/>
</dbReference>
<dbReference type="Pfam" id="PF01795">
    <property type="entry name" value="Methyltransf_5"/>
    <property type="match status" value="1"/>
</dbReference>
<dbReference type="PIRSF" id="PIRSF004486">
    <property type="entry name" value="MraW"/>
    <property type="match status" value="1"/>
</dbReference>
<dbReference type="SUPFAM" id="SSF81799">
    <property type="entry name" value="Putative methyltransferase TM0872, insert domain"/>
    <property type="match status" value="1"/>
</dbReference>
<dbReference type="SUPFAM" id="SSF53335">
    <property type="entry name" value="S-adenosyl-L-methionine-dependent methyltransferases"/>
    <property type="match status" value="1"/>
</dbReference>
<evidence type="ECO:0000255" key="1">
    <source>
        <dbReference type="HAMAP-Rule" id="MF_01007"/>
    </source>
</evidence>
<protein>
    <recommendedName>
        <fullName evidence="1">Ribosomal RNA small subunit methyltransferase H</fullName>
        <ecNumber evidence="1">2.1.1.199</ecNumber>
    </recommendedName>
    <alternativeName>
        <fullName evidence="1">16S rRNA m(4)C1402 methyltransferase</fullName>
    </alternativeName>
    <alternativeName>
        <fullName evidence="1">rRNA (cytosine-N(4)-)-methyltransferase RsmH</fullName>
    </alternativeName>
</protein>
<feature type="chain" id="PRO_0000108746" description="Ribosomal RNA small subunit methyltransferase H">
    <location>
        <begin position="1"/>
        <end position="316"/>
    </location>
</feature>
<feature type="binding site" evidence="1">
    <location>
        <begin position="35"/>
        <end position="37"/>
    </location>
    <ligand>
        <name>S-adenosyl-L-methionine</name>
        <dbReference type="ChEBI" id="CHEBI:59789"/>
    </ligand>
</feature>
<feature type="binding site" evidence="1">
    <location>
        <position position="55"/>
    </location>
    <ligand>
        <name>S-adenosyl-L-methionine</name>
        <dbReference type="ChEBI" id="CHEBI:59789"/>
    </ligand>
</feature>
<feature type="binding site" evidence="1">
    <location>
        <position position="79"/>
    </location>
    <ligand>
        <name>S-adenosyl-L-methionine</name>
        <dbReference type="ChEBI" id="CHEBI:59789"/>
    </ligand>
</feature>
<feature type="binding site" evidence="1">
    <location>
        <position position="101"/>
    </location>
    <ligand>
        <name>S-adenosyl-L-methionine</name>
        <dbReference type="ChEBI" id="CHEBI:59789"/>
    </ligand>
</feature>
<feature type="binding site" evidence="1">
    <location>
        <position position="108"/>
    </location>
    <ligand>
        <name>S-adenosyl-L-methionine</name>
        <dbReference type="ChEBI" id="CHEBI:59789"/>
    </ligand>
</feature>
<proteinExistence type="inferred from homology"/>
<name>RSMH_VIBVY</name>
<sequence length="316" mass="34999">MTDTFQHISVLLHESIDGLAIKPDGIYIDGTFGRGGHSRTILSKLGEHGRLYSIDRDPQAIAEAGKIDDPRFTIIHGPFSGMANYAEQYDLVGKVDGVLLDLGVSSPQLDDAERGFSFMKDGPLDMRMDPTSGIPVSQWLMEADLDDITWVIREFGEDKHARRIAKAIVAHREDETKEPLTRTSQLAKLISEAAPKSFKEKKHPATRAFQAFRIYINSELEEIDTALKGAASILAPEGRLSVISFHSLEDRMVKRFMRKESKGPEVPHGIPLTEAQIKALGSANMKTVGKAIMPTAQEIELNPRSRSSVLRIAEKL</sequence>
<keyword id="KW-0963">Cytoplasm</keyword>
<keyword id="KW-0489">Methyltransferase</keyword>
<keyword id="KW-0698">rRNA processing</keyword>
<keyword id="KW-0949">S-adenosyl-L-methionine</keyword>
<keyword id="KW-0808">Transferase</keyword>